<protein>
    <recommendedName>
        <fullName>Putative transcriptional regulatory protein for hcr operon</fullName>
    </recommendedName>
</protein>
<sequence length="166" mass="18383">MRKHRGKPANSDLAELVHGSMAGELGFHLRRGQIAAFRQFARTITTTEGVTPGLYGMLQVIANNPGLSQSALAVAMDVDRSSIVKVVNQLEEKGLIVRDTSPTDRRRYCLHMTPPGVQALARIEQAVMRQDQDFSARLSDAERGTLIGLLKRLYRQDSETPANVRE</sequence>
<accession>O33817</accession>
<feature type="chain" id="PRO_0000054354" description="Putative transcriptional regulatory protein for hcr operon">
    <location>
        <begin position="1"/>
        <end position="166"/>
    </location>
</feature>
<feature type="domain" description="HTH marR-type" evidence="1">
    <location>
        <begin position="1"/>
        <end position="155"/>
    </location>
</feature>
<proteinExistence type="predicted"/>
<comment type="function">
    <text>May be involved in the regulation of genes for 4-hydroxybenzoyl-CoA reductase.</text>
</comment>
<organism>
    <name type="scientific">Thauera aromatica</name>
    <dbReference type="NCBI Taxonomy" id="59405"/>
    <lineage>
        <taxon>Bacteria</taxon>
        <taxon>Pseudomonadati</taxon>
        <taxon>Pseudomonadota</taxon>
        <taxon>Betaproteobacteria</taxon>
        <taxon>Rhodocyclales</taxon>
        <taxon>Zoogloeaceae</taxon>
        <taxon>Thauera</taxon>
    </lineage>
</organism>
<name>HCRR_THAAR</name>
<dbReference type="EMBL" id="AJ001830">
    <property type="protein sequence ID" value="CAA05036.1"/>
    <property type="molecule type" value="Genomic_DNA"/>
</dbReference>
<dbReference type="SMR" id="O33817"/>
<dbReference type="GO" id="GO:0003677">
    <property type="term" value="F:DNA binding"/>
    <property type="evidence" value="ECO:0007669"/>
    <property type="project" value="UniProtKB-KW"/>
</dbReference>
<dbReference type="GO" id="GO:0003700">
    <property type="term" value="F:DNA-binding transcription factor activity"/>
    <property type="evidence" value="ECO:0007669"/>
    <property type="project" value="InterPro"/>
</dbReference>
<dbReference type="GO" id="GO:0006950">
    <property type="term" value="P:response to stress"/>
    <property type="evidence" value="ECO:0007669"/>
    <property type="project" value="TreeGrafter"/>
</dbReference>
<dbReference type="Gene3D" id="1.10.10.10">
    <property type="entry name" value="Winged helix-like DNA-binding domain superfamily/Winged helix DNA-binding domain"/>
    <property type="match status" value="1"/>
</dbReference>
<dbReference type="InterPro" id="IPR000835">
    <property type="entry name" value="HTH_MarR-typ"/>
</dbReference>
<dbReference type="InterPro" id="IPR039422">
    <property type="entry name" value="MarR/SlyA-like"/>
</dbReference>
<dbReference type="InterPro" id="IPR023187">
    <property type="entry name" value="Tscrpt_reg_MarR-type_CS"/>
</dbReference>
<dbReference type="InterPro" id="IPR036388">
    <property type="entry name" value="WH-like_DNA-bd_sf"/>
</dbReference>
<dbReference type="InterPro" id="IPR036390">
    <property type="entry name" value="WH_DNA-bd_sf"/>
</dbReference>
<dbReference type="PANTHER" id="PTHR33164:SF43">
    <property type="entry name" value="HTH-TYPE TRANSCRIPTIONAL REPRESSOR YETL"/>
    <property type="match status" value="1"/>
</dbReference>
<dbReference type="PANTHER" id="PTHR33164">
    <property type="entry name" value="TRANSCRIPTIONAL REGULATOR, MARR FAMILY"/>
    <property type="match status" value="1"/>
</dbReference>
<dbReference type="Pfam" id="PF12802">
    <property type="entry name" value="MarR_2"/>
    <property type="match status" value="1"/>
</dbReference>
<dbReference type="PRINTS" id="PR00598">
    <property type="entry name" value="HTHMARR"/>
</dbReference>
<dbReference type="SMART" id="SM00347">
    <property type="entry name" value="HTH_MARR"/>
    <property type="match status" value="1"/>
</dbReference>
<dbReference type="SUPFAM" id="SSF46785">
    <property type="entry name" value="Winged helix' DNA-binding domain"/>
    <property type="match status" value="1"/>
</dbReference>
<dbReference type="PROSITE" id="PS01117">
    <property type="entry name" value="HTH_MARR_1"/>
    <property type="match status" value="1"/>
</dbReference>
<dbReference type="PROSITE" id="PS50995">
    <property type="entry name" value="HTH_MARR_2"/>
    <property type="match status" value="1"/>
</dbReference>
<reference key="1">
    <citation type="journal article" date="1998" name="Eur. J. Biochem.">
        <title>4-hydroxybenzoyl-CoA reductase (dehydroxylating) from the denitrifying bacterium Thauera aromatica -- prosthetic groups, electron donor, and genes of a member of the molybdenum-flavin-iron-sulfur proteins.</title>
        <authorList>
            <person name="Breese K."/>
            <person name="Fuchs G."/>
        </authorList>
    </citation>
    <scope>NUCLEOTIDE SEQUENCE [GENOMIC DNA]</scope>
    <source>
        <strain>DSM 6984 / CIP 107765 / K172</strain>
    </source>
</reference>
<evidence type="ECO:0000255" key="1">
    <source>
        <dbReference type="PROSITE-ProRule" id="PRU00345"/>
    </source>
</evidence>
<keyword id="KW-0238">DNA-binding</keyword>
<keyword id="KW-0804">Transcription</keyword>
<keyword id="KW-0805">Transcription regulation</keyword>